<gene>
    <name type="primary">SRL1</name>
    <name type="ordered locus">YOR247W</name>
</gene>
<proteinExistence type="evidence at protein level"/>
<organism>
    <name type="scientific">Saccharomyces cerevisiae (strain ATCC 204508 / S288c)</name>
    <name type="common">Baker's yeast</name>
    <dbReference type="NCBI Taxonomy" id="559292"/>
    <lineage>
        <taxon>Eukaryota</taxon>
        <taxon>Fungi</taxon>
        <taxon>Dikarya</taxon>
        <taxon>Ascomycota</taxon>
        <taxon>Saccharomycotina</taxon>
        <taxon>Saccharomycetes</taxon>
        <taxon>Saccharomycetales</taxon>
        <taxon>Saccharomycetaceae</taxon>
        <taxon>Saccharomyces</taxon>
    </lineage>
</organism>
<protein>
    <recommendedName>
        <fullName>Cell wall protein SRL1</fullName>
    </recommendedName>
</protein>
<name>SRL1_YEAST</name>
<keyword id="KW-0134">Cell wall</keyword>
<keyword id="KW-0961">Cell wall biogenesis/degradation</keyword>
<keyword id="KW-0325">Glycoprotein</keyword>
<keyword id="KW-1185">Reference proteome</keyword>
<keyword id="KW-0964">Secreted</keyword>
<keyword id="KW-0732">Signal</keyword>
<reference key="1">
    <citation type="journal article" date="1997" name="Yeast">
        <title>Sequencing analysis of a 36.8 kb fragment of yeast chromosome XV reveals 26 open reading frames including SEC63, CDC31, SUG2, GCD1, RBL2, PNT1, PAC1 and VPH1.</title>
        <authorList>
            <person name="Poirey R."/>
            <person name="Jauniaux J.-C."/>
        </authorList>
    </citation>
    <scope>NUCLEOTIDE SEQUENCE [GENOMIC DNA]</scope>
</reference>
<reference key="2">
    <citation type="journal article" date="1997" name="Nature">
        <title>The nucleotide sequence of Saccharomyces cerevisiae chromosome XV.</title>
        <authorList>
            <person name="Dujon B."/>
            <person name="Albermann K."/>
            <person name="Aldea M."/>
            <person name="Alexandraki D."/>
            <person name="Ansorge W."/>
            <person name="Arino J."/>
            <person name="Benes V."/>
            <person name="Bohn C."/>
            <person name="Bolotin-Fukuhara M."/>
            <person name="Bordonne R."/>
            <person name="Boyer J."/>
            <person name="Camasses A."/>
            <person name="Casamayor A."/>
            <person name="Casas C."/>
            <person name="Cheret G."/>
            <person name="Cziepluch C."/>
            <person name="Daignan-Fornier B."/>
            <person name="Dang V.-D."/>
            <person name="de Haan M."/>
            <person name="Delius H."/>
            <person name="Durand P."/>
            <person name="Fairhead C."/>
            <person name="Feldmann H."/>
            <person name="Gaillon L."/>
            <person name="Galisson F."/>
            <person name="Gamo F.-J."/>
            <person name="Gancedo C."/>
            <person name="Goffeau A."/>
            <person name="Goulding S.E."/>
            <person name="Grivell L.A."/>
            <person name="Habbig B."/>
            <person name="Hand N.J."/>
            <person name="Hani J."/>
            <person name="Hattenhorst U."/>
            <person name="Hebling U."/>
            <person name="Hernando Y."/>
            <person name="Herrero E."/>
            <person name="Heumann K."/>
            <person name="Hiesel R."/>
            <person name="Hilger F."/>
            <person name="Hofmann B."/>
            <person name="Hollenberg C.P."/>
            <person name="Hughes B."/>
            <person name="Jauniaux J.-C."/>
            <person name="Kalogeropoulos A."/>
            <person name="Katsoulou C."/>
            <person name="Kordes E."/>
            <person name="Lafuente M.J."/>
            <person name="Landt O."/>
            <person name="Louis E.J."/>
            <person name="Maarse A.C."/>
            <person name="Madania A."/>
            <person name="Mannhaupt G."/>
            <person name="Marck C."/>
            <person name="Martin R.P."/>
            <person name="Mewes H.-W."/>
            <person name="Michaux G."/>
            <person name="Paces V."/>
            <person name="Parle-McDermott A.G."/>
            <person name="Pearson B.M."/>
            <person name="Perrin A."/>
            <person name="Pettersson B."/>
            <person name="Poch O."/>
            <person name="Pohl T.M."/>
            <person name="Poirey R."/>
            <person name="Portetelle D."/>
            <person name="Pujol A."/>
            <person name="Purnelle B."/>
            <person name="Ramezani Rad M."/>
            <person name="Rechmann S."/>
            <person name="Schwager C."/>
            <person name="Schweizer M."/>
            <person name="Sor F."/>
            <person name="Sterky F."/>
            <person name="Tarassov I.A."/>
            <person name="Teodoru C."/>
            <person name="Tettelin H."/>
            <person name="Thierry A."/>
            <person name="Tobiasch E."/>
            <person name="Tzermia M."/>
            <person name="Uhlen M."/>
            <person name="Unseld M."/>
            <person name="Valens M."/>
            <person name="Vandenbol M."/>
            <person name="Vetter I."/>
            <person name="Vlcek C."/>
            <person name="Voet M."/>
            <person name="Volckaert G."/>
            <person name="Voss H."/>
            <person name="Wambutt R."/>
            <person name="Wedler H."/>
            <person name="Wiemann S."/>
            <person name="Winsor B."/>
            <person name="Wolfe K.H."/>
            <person name="Zollner A."/>
            <person name="Zumstein E."/>
            <person name="Kleine K."/>
        </authorList>
    </citation>
    <scope>NUCLEOTIDE SEQUENCE [LARGE SCALE GENOMIC DNA]</scope>
    <source>
        <strain>ATCC 204508 / S288c</strain>
    </source>
</reference>
<reference key="3">
    <citation type="journal article" date="2014" name="G3 (Bethesda)">
        <title>The reference genome sequence of Saccharomyces cerevisiae: Then and now.</title>
        <authorList>
            <person name="Engel S.R."/>
            <person name="Dietrich F.S."/>
            <person name="Fisk D.G."/>
            <person name="Binkley G."/>
            <person name="Balakrishnan R."/>
            <person name="Costanzo M.C."/>
            <person name="Dwight S.S."/>
            <person name="Hitz B.C."/>
            <person name="Karra K."/>
            <person name="Nash R.S."/>
            <person name="Weng S."/>
            <person name="Wong E.D."/>
            <person name="Lloyd P."/>
            <person name="Skrzypek M.S."/>
            <person name="Miyasato S.R."/>
            <person name="Simison M."/>
            <person name="Cherry J.M."/>
        </authorList>
    </citation>
    <scope>GENOME REANNOTATION</scope>
    <source>
        <strain>ATCC 204508 / S288c</strain>
    </source>
</reference>
<reference key="4">
    <citation type="journal article" date="2002" name="Curr. Genet.">
        <title>Sequence-based approach for identification of cell wall proteins in Saccharomyces cerevisiae.</title>
        <authorList>
            <person name="Terashima H."/>
            <person name="Fukuchi S."/>
            <person name="Nakai K."/>
            <person name="Arisawa M."/>
            <person name="Hamada K."/>
            <person name="Yabuki N."/>
            <person name="Kitada K."/>
        </authorList>
    </citation>
    <scope>SUBCELLULAR LOCATION</scope>
</reference>
<reference key="5">
    <citation type="journal article" date="2003" name="Nature">
        <title>Global analysis of protein localization in budding yeast.</title>
        <authorList>
            <person name="Huh W.-K."/>
            <person name="Falvo J.V."/>
            <person name="Gerke L.C."/>
            <person name="Carroll A.S."/>
            <person name="Howson R.W."/>
            <person name="Weissman J.S."/>
            <person name="O'Shea E.K."/>
        </authorList>
    </citation>
    <scope>SUBCELLULAR LOCATION [LARGE SCALE ANALYSIS]</scope>
</reference>
<reference key="6">
    <citation type="journal article" date="2003" name="Proc. Natl. Acad. Sci. U.S.A.">
        <title>Widespread cytoplasmic mRNA transport in yeast: identification of 22 bud-localized transcripts using DNA microarray analysis.</title>
        <authorList>
            <person name="Shepard K.A."/>
            <person name="Gerber A.P."/>
            <person name="Jambhekar A."/>
            <person name="Takizawa P.A."/>
            <person name="Brown P.O."/>
            <person name="Herschlag D."/>
            <person name="DeRisi J.L."/>
            <person name="Vale R.D."/>
        </authorList>
    </citation>
    <scope>SUBCELLULAR LOCATION</scope>
</reference>
<reference key="7">
    <citation type="journal article" date="2004" name="Mol. Microbiol.">
        <title>Sed1p and Srl1p are required to compensate for cell wall instability in Saccharomyces cerevisiae mutants defective in multiple GPI-anchored mannoproteins.</title>
        <authorList>
            <person name="Hagen I."/>
            <person name="Ecker M."/>
            <person name="Lagorce A."/>
            <person name="Francois J.M."/>
            <person name="Sestak S."/>
            <person name="Rachel R."/>
            <person name="Grossmann G."/>
            <person name="Hauser N.C."/>
            <person name="Hoheisel J.D."/>
            <person name="Tanner W."/>
            <person name="Strahl S."/>
        </authorList>
    </citation>
    <scope>FUNCTION</scope>
    <scope>SUBCELLULAR LOCATION</scope>
</reference>
<reference key="8">
    <citation type="journal article" date="2005" name="Genetics">
        <title>A role for the Saccharomyces cerevisiae regulation of Ace2 and polarized morphogenesis signaling network in cell integrity.</title>
        <authorList>
            <person name="Kurischko C."/>
            <person name="Weiss G."/>
            <person name="Ottey M."/>
            <person name="Luca F.C."/>
        </authorList>
    </citation>
    <scope>FUNCTION</scope>
</reference>
<evidence type="ECO:0000255" key="1"/>
<evidence type="ECO:0000256" key="2">
    <source>
        <dbReference type="SAM" id="MobiDB-lite"/>
    </source>
</evidence>
<evidence type="ECO:0000269" key="3">
    <source>
    </source>
</evidence>
<evidence type="ECO:0000269" key="4">
    <source>
    </source>
</evidence>
<sequence>MLQSVVFFALLTFASSVSAIYSNNTVSTTTTLAPSYSLVPQETTISYADDTTTFFVTSTVYSTSWFTSTSATITNAASSSLSTSSASGSVTPESTHEITSTSTITSTLLLTLHDSTTLSPSSTAASVSDEDSNNKDAKVKSFEQASTSNGCVPITKFVTVTNEPVTQYVTVTPNTTTQYVTVTGAPSVTTTSPGNVQWYNTTSITNSTSW</sequence>
<comment type="function">
    <text evidence="3 4">Required to stabilize the cell wall in the absence of multiple GPI-anchored mannoproteins.</text>
</comment>
<comment type="subcellular location">
    <subcellularLocation>
        <location>Secreted</location>
        <location>Cell wall</location>
    </subcellularLocation>
    <subcellularLocation>
        <location>Cell surface</location>
    </subcellularLocation>
</comment>
<feature type="signal peptide" evidence="1">
    <location>
        <begin position="1"/>
        <end position="19"/>
    </location>
</feature>
<feature type="chain" id="PRO_0000270576" description="Cell wall protein SRL1">
    <location>
        <begin position="20"/>
        <end position="210"/>
    </location>
</feature>
<feature type="region of interest" description="Disordered" evidence="2">
    <location>
        <begin position="80"/>
        <end position="99"/>
    </location>
</feature>
<feature type="region of interest" description="Disordered" evidence="2">
    <location>
        <begin position="118"/>
        <end position="142"/>
    </location>
</feature>
<feature type="compositionally biased region" description="Low complexity" evidence="2">
    <location>
        <begin position="118"/>
        <end position="127"/>
    </location>
</feature>
<feature type="compositionally biased region" description="Basic and acidic residues" evidence="2">
    <location>
        <begin position="132"/>
        <end position="141"/>
    </location>
</feature>
<feature type="glycosylation site" description="N-linked (GlcNAc...) asparagine" evidence="1">
    <location>
        <position position="23"/>
    </location>
</feature>
<feature type="glycosylation site" description="N-linked (GlcNAc...) asparagine" evidence="1">
    <location>
        <position position="174"/>
    </location>
</feature>
<feature type="glycosylation site" description="N-linked (GlcNAc...) asparagine" evidence="1">
    <location>
        <position position="200"/>
    </location>
</feature>
<feature type="glycosylation site" description="N-linked (GlcNAc...) asparagine" evidence="1">
    <location>
        <position position="206"/>
    </location>
</feature>
<accession>Q08673</accession>
<accession>D6W2U9</accession>
<dbReference type="EMBL" id="Z75155">
    <property type="protein sequence ID" value="CAA99468.1"/>
    <property type="molecule type" value="Genomic_DNA"/>
</dbReference>
<dbReference type="EMBL" id="BK006948">
    <property type="protein sequence ID" value="DAA11015.1"/>
    <property type="molecule type" value="Genomic_DNA"/>
</dbReference>
<dbReference type="PIR" id="S67140">
    <property type="entry name" value="S67140"/>
</dbReference>
<dbReference type="RefSeq" id="NP_014890.1">
    <property type="nucleotide sequence ID" value="NM_001183666.1"/>
</dbReference>
<dbReference type="BioGRID" id="34638">
    <property type="interactions" value="58"/>
</dbReference>
<dbReference type="DIP" id="DIP-4789N"/>
<dbReference type="FunCoup" id="Q08673">
    <property type="interactions" value="101"/>
</dbReference>
<dbReference type="IntAct" id="Q08673">
    <property type="interactions" value="4"/>
</dbReference>
<dbReference type="MINT" id="Q08673"/>
<dbReference type="STRING" id="4932.YOR247W"/>
<dbReference type="GlyCosmos" id="Q08673">
    <property type="glycosylation" value="4 sites, No reported glycans"/>
</dbReference>
<dbReference type="GlyGen" id="Q08673">
    <property type="glycosylation" value="4 sites"/>
</dbReference>
<dbReference type="PaxDb" id="4932-YOR247W"/>
<dbReference type="TopDownProteomics" id="Q08673"/>
<dbReference type="EnsemblFungi" id="YOR247W_mRNA">
    <property type="protein sequence ID" value="YOR247W"/>
    <property type="gene ID" value="YOR247W"/>
</dbReference>
<dbReference type="GeneID" id="854421"/>
<dbReference type="KEGG" id="sce:YOR247W"/>
<dbReference type="AGR" id="SGD:S000005773"/>
<dbReference type="SGD" id="S000005773">
    <property type="gene designation" value="SRL1"/>
</dbReference>
<dbReference type="VEuPathDB" id="FungiDB:YOR247W"/>
<dbReference type="eggNOG" id="ENOG502SV02">
    <property type="taxonomic scope" value="Eukaryota"/>
</dbReference>
<dbReference type="HOGENOM" id="CLU_1355342_0_0_1"/>
<dbReference type="InParanoid" id="Q08673"/>
<dbReference type="OMA" id="CAPVTEY"/>
<dbReference type="OrthoDB" id="4069554at2759"/>
<dbReference type="BioCyc" id="YEAST:G3O-33740-MONOMER"/>
<dbReference type="BioGRID-ORCS" id="854421">
    <property type="hits" value="3 hits in 10 CRISPR screens"/>
</dbReference>
<dbReference type="PRO" id="PR:Q08673"/>
<dbReference type="Proteomes" id="UP000002311">
    <property type="component" value="Chromosome XV"/>
</dbReference>
<dbReference type="RNAct" id="Q08673">
    <property type="molecule type" value="protein"/>
</dbReference>
<dbReference type="GO" id="GO:0071944">
    <property type="term" value="C:cell periphery"/>
    <property type="evidence" value="ECO:0007005"/>
    <property type="project" value="SGD"/>
</dbReference>
<dbReference type="GO" id="GO:0009986">
    <property type="term" value="C:cell surface"/>
    <property type="evidence" value="ECO:0007669"/>
    <property type="project" value="UniProtKB-SubCell"/>
</dbReference>
<dbReference type="GO" id="GO:0005934">
    <property type="term" value="C:cellular bud tip"/>
    <property type="evidence" value="ECO:0000314"/>
    <property type="project" value="SGD"/>
</dbReference>
<dbReference type="GO" id="GO:0005737">
    <property type="term" value="C:cytoplasm"/>
    <property type="evidence" value="ECO:0007005"/>
    <property type="project" value="SGD"/>
</dbReference>
<dbReference type="GO" id="GO:0005576">
    <property type="term" value="C:extracellular region"/>
    <property type="evidence" value="ECO:0007669"/>
    <property type="project" value="UniProtKB-KW"/>
</dbReference>
<dbReference type="GO" id="GO:0009277">
    <property type="term" value="C:fungal-type cell wall"/>
    <property type="evidence" value="ECO:0000314"/>
    <property type="project" value="SGD"/>
</dbReference>
<dbReference type="GO" id="GO:0000324">
    <property type="term" value="C:fungal-type vacuole"/>
    <property type="evidence" value="ECO:0007005"/>
    <property type="project" value="SGD"/>
</dbReference>
<dbReference type="GO" id="GO:0031505">
    <property type="term" value="P:fungal-type cell wall organization"/>
    <property type="evidence" value="ECO:0000315"/>
    <property type="project" value="SGD"/>
</dbReference>
<dbReference type="GO" id="GO:0006139">
    <property type="term" value="P:nucleobase-containing compound metabolic process"/>
    <property type="evidence" value="ECO:0000315"/>
    <property type="project" value="SGD"/>
</dbReference>